<gene>
    <name evidence="9" type="primary">gfsC</name>
</gene>
<sequence>MTDEAKLLSYLKRVTADLDRTTRRLREAEEQRYEAIAIVGMACRYPGGVRSPEELWRLVADEADAVSHFPQNRGWDLDTLFDPERAGGTSLTQEGGFLYDADQFDAGFFGIGPREATAMDPQQRLLLETSWEALERAGIDPATLRGSATGVFAGVMYHDYGARVVEVPEEVEGYLGNGNAGSIASGRVAFTFGFEGPAVTLDTACSSSLVALHLAAQALRQGECSLALAGGVTVMATPGVFTEFTRQGGLAADGRCKSFSTTADGTGWSEGAGMLLLERLSDAERNGHLVLAVVRGSAVNQDGASSGLTAPNGPAQQRVIRQALANARLSASEVDVVEAHGTGTKLGDPIEAQALLATYGQDRAEDRPLWLGSVKSNLGHTQAAAGVAGIIKSVMAMRHGVLPATLHVDEPTSEVDWSAGAVELLTKSRSWPETGRPRRAAVSGFGVSGTNAHVILEQAADLDVPDAAPVPEGVPVPWVVSARSADALRAQARRLRGHMAAEPGAAVVDVGHSLATARSCFEHRAVVIGRTTDDLLAGLEALAEGRGDSRVRVGAGLAGGRTGFVFAGQGSQRLGMGGRLREMFPVFGEAWDEVVAELDGRLGRPLGEVVFAEEGSEQASLVDRTEFTQPALFAFEVALFRLLESWGVVPDVVAGHSIGELAAAYVAGVLSLSDACALVVARGRLMQALPAGGAMVAVQVTEAEARRLVEGEPSGAVDIAAVNGPESVVIAGDEDVVLRVQEIVRGRGRKTKRLTVSHAFHSPRMEPMLDEFRRVAETVTYHEPRIAVVSAVSGEVAGAELRSAEYWTRHVREAVRFYDAVRCLRSEGVSTFVEVGPDGALSALGQDCLVGEEARGTEFVSTVRAGRDEAESVVAAVGAAHVRGVPVDWAAYYAPYGPRRAGLPTYAFEHQRYWLDASVRTVGDLAGLGLGSAEHPLLGAAVALADGDGVLLTGRLSLATHPWLADHRVQGAVLFPGTAFVELALRAGEQVGADCVEELTLEVPLVLPERGGVQVQVVVGAADEQGGRPVTVYSRPDEDVEDEPWARHAIGMLVPFAASAAVPAEDADFAVWPPQDAVAVDTDGMYDRLAEGGLEYGPVFQGLRSVWRRGSEVFAEVALDDTHRDGAEHDVSAVSAPETTAPVWRLEATGGGTLDALALVAYEETDRPLRANEVRVEVHAAGLNFRDVLITLGMLETKDKLGWELSGVVLETGPDVTGLAPGDRVMGVALGSFAQQAVADHRMLAKIPDGWSYAEAASVPLVFLTAYYSLVDLADLRAGQSVLIHAAAGGVGMAAVQLARHLGAEVFGTASTGKWDALRAQGLDETHIASSRDLEFEPRVLEATDGRGVDVVLDALAGEFVDASLRTLTHGGRFIEMGKTDIRDAEEVAARYPGVHYRAFDLIEAGPERVGQMLAEVLRLFDDGALTVLPVTTWDLLSAPDAFRHLSQARHIGKVVLTVPRTIDPYDTELAVVTRSRSRWRTGRSSARLTANPNSAGEFGLHPALLDAALHAIGFGEFVSDGGAGVLPFSWSGVRLLASGADALRVRVSGVGVGANEVALVVADGSGRPVASVDSLALRPVSADGIGAGRSGASRQSLFRVGWRQVAVPDQAGAGEWVALDRGAGWAQGEGCEVLPDLAALGSAVSAGRSVPRLVVAHFAADREVPVTAGVRGVTAEGLELIQSWLADERFADSRLVIMTRQAVAVDAGEGVFDLGAAALWGLVRTAQSEQPGRVVLVDVDDLDAVSRVVGIGDEPQLAVRDGRVFVPRLMRAEAIDGVPVWDPEGTLLITGASGALGGVVARHVVREWGVRHLVLASRRGAEAPGMTELVAELGELGASAAPVACDVADRDALAAVLAGIPAVHRLAGVVHAAGVLDDGVVGSLTPERLETVLAPKADAAWHLHELAAELDLSVFVLFSSAASVFGGAGQGNYAAANAFLDALAARRRADGLVATSLSWGLWDQAGGMTGQLGEADVARMSRSGVLPISVGEALPLLDAGVTGGDAWLAPVRLDLAALRQQAIATGGVPALLRDLVRVPNRRKAETGGSGAGSRSSLTDKLAGLPQEERAQELLDFVCEHTAAVLGHSGAGMVDPGRNFRELGIDSLAAVELRNRIGGVLGIRLSATLVFDYPSPVLLAGHIGEQLALDEPAPRLPVVAELERLEAAVSAARFDEDSRDDVAARLRKLLSHLDALAASPKREADDGELASASVEELFALVDQELEDL</sequence>
<evidence type="ECO:0000250" key="1">
    <source>
        <dbReference type="UniProtKB" id="I6XD69"/>
    </source>
</evidence>
<evidence type="ECO:0000255" key="2"/>
<evidence type="ECO:0000255" key="3">
    <source>
        <dbReference type="PROSITE-ProRule" id="PRU00258"/>
    </source>
</evidence>
<evidence type="ECO:0000255" key="4">
    <source>
        <dbReference type="PROSITE-ProRule" id="PRU01348"/>
    </source>
</evidence>
<evidence type="ECO:0000255" key="5">
    <source>
        <dbReference type="PROSITE-ProRule" id="PRU01363"/>
    </source>
</evidence>
<evidence type="ECO:0000269" key="6">
    <source>
    </source>
</evidence>
<evidence type="ECO:0000269" key="7">
    <source>
    </source>
</evidence>
<evidence type="ECO:0000269" key="8">
    <source ref="4"/>
</evidence>
<evidence type="ECO:0000303" key="9">
    <source>
    </source>
</evidence>
<evidence type="ECO:0000305" key="10"/>
<evidence type="ECO:0000305" key="11">
    <source>
    </source>
</evidence>
<evidence type="ECO:0000312" key="12">
    <source>
        <dbReference type="EMBL" id="BAJ16469.1"/>
    </source>
</evidence>
<feature type="chain" id="PRO_0000461665" description="Polyketide synthase GfsC">
    <location>
        <begin position="1"/>
        <end position="2228"/>
    </location>
</feature>
<feature type="domain" description="Ketosynthase family 3 (KS3)" evidence="4">
    <location>
        <begin position="33"/>
        <end position="458"/>
    </location>
</feature>
<feature type="domain" description="Malonyl-CoA:ACP transacylase (MAT)" evidence="2">
    <location>
        <begin position="564"/>
        <end position="885"/>
    </location>
</feature>
<feature type="domain" description="PKS/mFAS DH" evidence="5">
    <location>
        <begin position="935"/>
        <end position="1239"/>
    </location>
</feature>
<feature type="domain" description="Enoyl reductase (ER)" evidence="2">
    <location>
        <begin position="1152"/>
        <end position="1457"/>
    </location>
</feature>
<feature type="domain" description="Ketoreductase (KR)" evidence="2">
    <location>
        <begin position="1786"/>
        <end position="1964"/>
    </location>
</feature>
<feature type="domain" description="Carrier" evidence="3">
    <location>
        <begin position="2072"/>
        <end position="2147"/>
    </location>
</feature>
<feature type="region of interest" description="Module 8" evidence="11">
    <location>
        <begin position="33"/>
        <end position="2147"/>
    </location>
</feature>
<feature type="region of interest" description="N-terminal hotdog fold" evidence="5">
    <location>
        <begin position="935"/>
        <end position="1060"/>
    </location>
</feature>
<feature type="region of interest" description="C-terminal hotdog fold" evidence="5">
    <location>
        <begin position="1077"/>
        <end position="1239"/>
    </location>
</feature>
<feature type="active site" description="For beta-ketoacyl synthase activity" evidence="4">
    <location>
        <position position="205"/>
    </location>
</feature>
<feature type="active site" description="For beta-ketoacyl synthase activity" evidence="4">
    <location>
        <position position="340"/>
    </location>
</feature>
<feature type="active site" description="For beta-ketoacyl synthase activity" evidence="4">
    <location>
        <position position="380"/>
    </location>
</feature>
<feature type="modified residue" description="O-(pantetheine 4'-phosphoryl)serine" evidence="3">
    <location>
        <position position="2107"/>
    </location>
</feature>
<keyword id="KW-0012">Acyltransferase</keyword>
<keyword id="KW-0045">Antibiotic biosynthesis</keyword>
<keyword id="KW-0511">Multifunctional enzyme</keyword>
<keyword id="KW-0596">Phosphopantetheine</keyword>
<keyword id="KW-0597">Phosphoprotein</keyword>
<keyword id="KW-0808">Transferase</keyword>
<comment type="function">
    <text evidence="6 11">Third protein in the synthesis of the 16-membered macrolide antibiotics FD-891 and FD-892 (PubMed:20589823). A single module protein (PubMed:20589823). Modifies the product of GfsB by addition of malonyl-CoA and other modifications to help generate the final products (Probable) (PubMed:20589823).</text>
</comment>
<comment type="cofactor">
    <cofactor evidence="3">
        <name>pantetheine 4'-phosphate</name>
        <dbReference type="ChEBI" id="CHEBI:47942"/>
    </cofactor>
    <text evidence="3">Binds 1 phosphopantetheine covalently.</text>
</comment>
<comment type="pathway">
    <text evidence="11">Antibiotic biosynthesis.</text>
</comment>
<comment type="domain">
    <text evidence="11">Type I modular polyketide synthases (PKS) catalyze the step-wise condensation of simple carboxylic acid derivatives. Type I PKSs are arranged into modules, where each module is comprised of a set of catalytic activities responsible for a single elongation of the polyketide chain and the appropriate reductive processing of the beta-keto functionality. A minimal elongation module contains a ketosynthase (KS) domain, an acyl transferase (AT) domain, and an acyl-carrier protein (ACP) domain. Optional modification (ketoreductase, dehydratase and enoylreductase) domains may also be present.</text>
</comment>
<comment type="miscellaneous">
    <text evidence="7 8">The macrolide antibiotics FD-891 and FD-892 induce morphological changes of human promyelocytic leukemia (HL-60) cells and have cytocidal activity against tumor cell lines in vitro (PubMed:8002384). FD-891 produced by Streptomyces sp. MAFF 225003 and MAFF 225006 inhibits growth of rice and alfalfa seedlings and may cause russet scab in potatoes (Ref.4).</text>
</comment>
<comment type="caution">
    <text evidence="5">Lacks conserved residue(s) required for the propagation of feature annotation.</text>
</comment>
<protein>
    <recommendedName>
        <fullName evidence="10">Polyketide synthase GfsC</fullName>
        <ecNumber evidence="1">2.3.1.-</ecNumber>
    </recommendedName>
    <alternativeName>
        <fullName>FD-891 synthase GfsC, module 8</fullName>
    </alternativeName>
</protein>
<accession>E0D204</accession>
<organism>
    <name type="scientific">Streptomyces halstedii</name>
    <dbReference type="NCBI Taxonomy" id="1944"/>
    <lineage>
        <taxon>Bacteria</taxon>
        <taxon>Bacillati</taxon>
        <taxon>Actinomycetota</taxon>
        <taxon>Actinomycetes</taxon>
        <taxon>Kitasatosporales</taxon>
        <taxon>Streptomycetaceae</taxon>
        <taxon>Streptomyces</taxon>
    </lineage>
</organism>
<proteinExistence type="evidence at protein level"/>
<name>GFSC_STRHA</name>
<reference evidence="12" key="1">
    <citation type="journal article" date="2010" name="ChemBioChem">
        <title>Cloning and characterization of the biosynthetic gene cluster of 16-membered macrolide antibiotic FD-891: involvement of a dual functional cytochrome P450 monooxygenase catalyzing epoxidation and hydroxylation.</title>
        <authorList>
            <person name="Kudo F."/>
            <person name="Motegi A."/>
            <person name="Mizoue K."/>
            <person name="Eguchi T."/>
        </authorList>
    </citation>
    <scope>NUCLEOTIDE SEQUENCE [GENOMIC DNA]</scope>
    <scope>PATHWAY</scope>
    <scope>DOMAIN</scope>
    <source>
        <strain>A-8890</strain>
    </source>
</reference>
<reference key="2">
    <citation type="journal article" date="2010" name="ChemBioChem">
        <authorList>
            <person name="Kudo F."/>
            <person name="Motegi A."/>
            <person name="Mizoue K."/>
            <person name="Eguchi T."/>
        </authorList>
    </citation>
    <scope>ERRATUM OF PUBMED:20589823</scope>
</reference>
<reference key="3">
    <citation type="journal article" date="1994" name="J. Antibiot.">
        <title>Isolation and characterization of new 18-membered macrolides FD-891 and FD-892.</title>
        <authorList>
            <person name="Seki-Asano M."/>
            <person name="Okazaki T."/>
            <person name="Yamagishi M."/>
            <person name="Sakai N."/>
            <person name="Hanada K."/>
            <person name="Mizoue K."/>
        </authorList>
    </citation>
    <scope>ANTIBIOTIC ISOLATION AND ACTIVITY CHARACTERIZATION AGAINST HUMAN CELL LINES</scope>
    <source>
        <strain>A-8890</strain>
    </source>
</reference>
<reference key="4">
    <citation type="journal article" date="2005" name="J. Gen. Plant Pathol.">
        <title>Phytotoxin produced by Streptomyces sp. causing potato russet scab in Japan.</title>
        <authorList>
            <person name="Natsume M."/>
            <person name="Komiya M."/>
            <person name="Koyanagi F."/>
            <person name="Tashiro N."/>
            <person name="Kawaide H."/>
            <person name="Abe H."/>
        </authorList>
    </citation>
    <scope>ANTIBIOTIC ISOLATION AND ACTIVITY CHARACTERIZATION AGAINST PLANTS</scope>
</reference>
<dbReference type="EC" id="2.3.1.-" evidence="1"/>
<dbReference type="EMBL" id="AB469193">
    <property type="protein sequence ID" value="BAJ16469.1"/>
    <property type="molecule type" value="Genomic_DNA"/>
</dbReference>
<dbReference type="GO" id="GO:0004315">
    <property type="term" value="F:3-oxoacyl-[acyl-carrier-protein] synthase activity"/>
    <property type="evidence" value="ECO:0007669"/>
    <property type="project" value="InterPro"/>
</dbReference>
<dbReference type="GO" id="GO:0004312">
    <property type="term" value="F:fatty acid synthase activity"/>
    <property type="evidence" value="ECO:0007669"/>
    <property type="project" value="TreeGrafter"/>
</dbReference>
<dbReference type="GO" id="GO:0016491">
    <property type="term" value="F:oxidoreductase activity"/>
    <property type="evidence" value="ECO:0007669"/>
    <property type="project" value="InterPro"/>
</dbReference>
<dbReference type="GO" id="GO:0031177">
    <property type="term" value="F:phosphopantetheine binding"/>
    <property type="evidence" value="ECO:0007669"/>
    <property type="project" value="InterPro"/>
</dbReference>
<dbReference type="GO" id="GO:0008270">
    <property type="term" value="F:zinc ion binding"/>
    <property type="evidence" value="ECO:0007669"/>
    <property type="project" value="InterPro"/>
</dbReference>
<dbReference type="GO" id="GO:0006633">
    <property type="term" value="P:fatty acid biosynthetic process"/>
    <property type="evidence" value="ECO:0007669"/>
    <property type="project" value="InterPro"/>
</dbReference>
<dbReference type="GO" id="GO:0033068">
    <property type="term" value="P:macrolide biosynthetic process"/>
    <property type="evidence" value="ECO:0007669"/>
    <property type="project" value="UniProtKB-ARBA"/>
</dbReference>
<dbReference type="CDD" id="cd05195">
    <property type="entry name" value="enoyl_red"/>
    <property type="match status" value="1"/>
</dbReference>
<dbReference type="CDD" id="cd08956">
    <property type="entry name" value="KR_3_FAS_SDR_x"/>
    <property type="match status" value="1"/>
</dbReference>
<dbReference type="CDD" id="cd00833">
    <property type="entry name" value="PKS"/>
    <property type="match status" value="1"/>
</dbReference>
<dbReference type="FunFam" id="3.40.50.720:FF:000209">
    <property type="entry name" value="Polyketide synthase Pks12"/>
    <property type="match status" value="1"/>
</dbReference>
<dbReference type="FunFam" id="3.40.47.10:FF:000019">
    <property type="entry name" value="Polyketide synthase type I"/>
    <property type="match status" value="1"/>
</dbReference>
<dbReference type="FunFam" id="3.40.366.10:FF:000002">
    <property type="entry name" value="Probable polyketide synthase 2"/>
    <property type="match status" value="1"/>
</dbReference>
<dbReference type="FunFam" id="3.90.180.10:FF:000032">
    <property type="entry name" value="Probable polyketide synthase pks1"/>
    <property type="match status" value="1"/>
</dbReference>
<dbReference type="FunFam" id="1.10.1200.10:FF:000007">
    <property type="entry name" value="Probable polyketide synthase pks17"/>
    <property type="match status" value="1"/>
</dbReference>
<dbReference type="Gene3D" id="3.30.70.3290">
    <property type="match status" value="1"/>
</dbReference>
<dbReference type="Gene3D" id="3.40.47.10">
    <property type="match status" value="1"/>
</dbReference>
<dbReference type="Gene3D" id="1.10.1200.10">
    <property type="entry name" value="ACP-like"/>
    <property type="match status" value="1"/>
</dbReference>
<dbReference type="Gene3D" id="3.40.366.10">
    <property type="entry name" value="Malonyl-Coenzyme A Acyl Carrier Protein, domain 2"/>
    <property type="match status" value="1"/>
</dbReference>
<dbReference type="Gene3D" id="3.90.180.10">
    <property type="entry name" value="Medium-chain alcohol dehydrogenases, catalytic domain"/>
    <property type="match status" value="1"/>
</dbReference>
<dbReference type="Gene3D" id="3.40.50.720">
    <property type="entry name" value="NAD(P)-binding Rossmann-like Domain"/>
    <property type="match status" value="1"/>
</dbReference>
<dbReference type="Gene3D" id="3.10.129.110">
    <property type="entry name" value="Polyketide synthase dehydratase"/>
    <property type="match status" value="2"/>
</dbReference>
<dbReference type="InterPro" id="IPR001227">
    <property type="entry name" value="Ac_transferase_dom_sf"/>
</dbReference>
<dbReference type="InterPro" id="IPR036736">
    <property type="entry name" value="ACP-like_sf"/>
</dbReference>
<dbReference type="InterPro" id="IPR014043">
    <property type="entry name" value="Acyl_transferase_dom"/>
</dbReference>
<dbReference type="InterPro" id="IPR016035">
    <property type="entry name" value="Acyl_Trfase/lysoPLipase"/>
</dbReference>
<dbReference type="InterPro" id="IPR013154">
    <property type="entry name" value="ADH-like_N"/>
</dbReference>
<dbReference type="InterPro" id="IPR011032">
    <property type="entry name" value="GroES-like_sf"/>
</dbReference>
<dbReference type="InterPro" id="IPR018201">
    <property type="entry name" value="Ketoacyl_synth_AS"/>
</dbReference>
<dbReference type="InterPro" id="IPR014031">
    <property type="entry name" value="Ketoacyl_synth_C"/>
</dbReference>
<dbReference type="InterPro" id="IPR014030">
    <property type="entry name" value="Ketoacyl_synth_N"/>
</dbReference>
<dbReference type="InterPro" id="IPR016036">
    <property type="entry name" value="Malonyl_transacylase_ACP-bd"/>
</dbReference>
<dbReference type="InterPro" id="IPR036291">
    <property type="entry name" value="NAD(P)-bd_dom_sf"/>
</dbReference>
<dbReference type="InterPro" id="IPR015083">
    <property type="entry name" value="NorB/c/GfsB-D-like_docking"/>
</dbReference>
<dbReference type="InterPro" id="IPR032821">
    <property type="entry name" value="PKS_assoc"/>
</dbReference>
<dbReference type="InterPro" id="IPR020841">
    <property type="entry name" value="PKS_Beta-ketoAc_synthase_dom"/>
</dbReference>
<dbReference type="InterPro" id="IPR042104">
    <property type="entry name" value="PKS_dehydratase_sf"/>
</dbReference>
<dbReference type="InterPro" id="IPR020807">
    <property type="entry name" value="PKS_DH"/>
</dbReference>
<dbReference type="InterPro" id="IPR049551">
    <property type="entry name" value="PKS_DH_C"/>
</dbReference>
<dbReference type="InterPro" id="IPR049552">
    <property type="entry name" value="PKS_DH_N"/>
</dbReference>
<dbReference type="InterPro" id="IPR020843">
    <property type="entry name" value="PKS_ER"/>
</dbReference>
<dbReference type="InterPro" id="IPR013968">
    <property type="entry name" value="PKS_KR"/>
</dbReference>
<dbReference type="InterPro" id="IPR049900">
    <property type="entry name" value="PKS_mFAS_DH"/>
</dbReference>
<dbReference type="InterPro" id="IPR050091">
    <property type="entry name" value="PKS_NRPS_Biosynth_Enz"/>
</dbReference>
<dbReference type="InterPro" id="IPR020806">
    <property type="entry name" value="PKS_PP-bd"/>
</dbReference>
<dbReference type="InterPro" id="IPR036299">
    <property type="entry name" value="Polyketide_synth_docking_sf"/>
</dbReference>
<dbReference type="InterPro" id="IPR009081">
    <property type="entry name" value="PP-bd_ACP"/>
</dbReference>
<dbReference type="InterPro" id="IPR006162">
    <property type="entry name" value="Ppantetheine_attach_site"/>
</dbReference>
<dbReference type="InterPro" id="IPR002364">
    <property type="entry name" value="Quin_OxRdtase/zeta-crystal_CS"/>
</dbReference>
<dbReference type="InterPro" id="IPR055123">
    <property type="entry name" value="SpnB-like_Rossmann"/>
</dbReference>
<dbReference type="InterPro" id="IPR016039">
    <property type="entry name" value="Thiolase-like"/>
</dbReference>
<dbReference type="PANTHER" id="PTHR43775">
    <property type="entry name" value="FATTY ACID SYNTHASE"/>
    <property type="match status" value="1"/>
</dbReference>
<dbReference type="PANTHER" id="PTHR43775:SF51">
    <property type="entry name" value="INACTIVE PHENOLPHTHIOCEROL SYNTHESIS POLYKETIDE SYNTHASE TYPE I PKS1-RELATED"/>
    <property type="match status" value="1"/>
</dbReference>
<dbReference type="Pfam" id="PF00698">
    <property type="entry name" value="Acyl_transf_1"/>
    <property type="match status" value="1"/>
</dbReference>
<dbReference type="Pfam" id="PF08240">
    <property type="entry name" value="ADH_N"/>
    <property type="match status" value="1"/>
</dbReference>
<dbReference type="Pfam" id="PF13602">
    <property type="entry name" value="ADH_zinc_N_2"/>
    <property type="match status" value="1"/>
</dbReference>
<dbReference type="Pfam" id="PF08990">
    <property type="entry name" value="Docking"/>
    <property type="match status" value="1"/>
</dbReference>
<dbReference type="Pfam" id="PF16197">
    <property type="entry name" value="KAsynt_C_assoc"/>
    <property type="match status" value="1"/>
</dbReference>
<dbReference type="Pfam" id="PF00109">
    <property type="entry name" value="ketoacyl-synt"/>
    <property type="match status" value="1"/>
</dbReference>
<dbReference type="Pfam" id="PF02801">
    <property type="entry name" value="Ketoacyl-synt_C"/>
    <property type="match status" value="1"/>
</dbReference>
<dbReference type="Pfam" id="PF08659">
    <property type="entry name" value="KR"/>
    <property type="match status" value="1"/>
</dbReference>
<dbReference type="Pfam" id="PF21089">
    <property type="entry name" value="PKS_DH_N"/>
    <property type="match status" value="1"/>
</dbReference>
<dbReference type="Pfam" id="PF00550">
    <property type="entry name" value="PP-binding"/>
    <property type="match status" value="1"/>
</dbReference>
<dbReference type="Pfam" id="PF14765">
    <property type="entry name" value="PS-DH"/>
    <property type="match status" value="2"/>
</dbReference>
<dbReference type="Pfam" id="PF22953">
    <property type="entry name" value="SpnB_Rossmann"/>
    <property type="match status" value="1"/>
</dbReference>
<dbReference type="SMART" id="SM00827">
    <property type="entry name" value="PKS_AT"/>
    <property type="match status" value="1"/>
</dbReference>
<dbReference type="SMART" id="SM00826">
    <property type="entry name" value="PKS_DH"/>
    <property type="match status" value="1"/>
</dbReference>
<dbReference type="SMART" id="SM00829">
    <property type="entry name" value="PKS_ER"/>
    <property type="match status" value="1"/>
</dbReference>
<dbReference type="SMART" id="SM00822">
    <property type="entry name" value="PKS_KR"/>
    <property type="match status" value="1"/>
</dbReference>
<dbReference type="SMART" id="SM00825">
    <property type="entry name" value="PKS_KS"/>
    <property type="match status" value="1"/>
</dbReference>
<dbReference type="SMART" id="SM00823">
    <property type="entry name" value="PKS_PP"/>
    <property type="match status" value="1"/>
</dbReference>
<dbReference type="SMART" id="SM01294">
    <property type="entry name" value="PKS_PP_betabranch"/>
    <property type="match status" value="1"/>
</dbReference>
<dbReference type="SUPFAM" id="SSF47336">
    <property type="entry name" value="ACP-like"/>
    <property type="match status" value="1"/>
</dbReference>
<dbReference type="SUPFAM" id="SSF101173">
    <property type="entry name" value="Docking domain B of the erythromycin polyketide synthase (DEBS)"/>
    <property type="match status" value="1"/>
</dbReference>
<dbReference type="SUPFAM" id="SSF52151">
    <property type="entry name" value="FabD/lysophospholipase-like"/>
    <property type="match status" value="1"/>
</dbReference>
<dbReference type="SUPFAM" id="SSF50129">
    <property type="entry name" value="GroES-like"/>
    <property type="match status" value="1"/>
</dbReference>
<dbReference type="SUPFAM" id="SSF51735">
    <property type="entry name" value="NAD(P)-binding Rossmann-fold domains"/>
    <property type="match status" value="3"/>
</dbReference>
<dbReference type="SUPFAM" id="SSF55048">
    <property type="entry name" value="Probable ACP-binding domain of malonyl-CoA ACP transacylase"/>
    <property type="match status" value="1"/>
</dbReference>
<dbReference type="SUPFAM" id="SSF53901">
    <property type="entry name" value="Thiolase-like"/>
    <property type="match status" value="1"/>
</dbReference>
<dbReference type="PROSITE" id="PS50075">
    <property type="entry name" value="CARRIER"/>
    <property type="match status" value="1"/>
</dbReference>
<dbReference type="PROSITE" id="PS00606">
    <property type="entry name" value="KS3_1"/>
    <property type="match status" value="1"/>
</dbReference>
<dbReference type="PROSITE" id="PS52004">
    <property type="entry name" value="KS3_2"/>
    <property type="match status" value="1"/>
</dbReference>
<dbReference type="PROSITE" id="PS00012">
    <property type="entry name" value="PHOSPHOPANTETHEINE"/>
    <property type="match status" value="1"/>
</dbReference>
<dbReference type="PROSITE" id="PS52019">
    <property type="entry name" value="PKS_MFAS_DH"/>
    <property type="match status" value="1"/>
</dbReference>
<dbReference type="PROSITE" id="PS01162">
    <property type="entry name" value="QOR_ZETA_CRYSTAL"/>
    <property type="match status" value="1"/>
</dbReference>